<name>RS11_CHLTB</name>
<feature type="chain" id="PRO_1000141071" description="Small ribosomal subunit protein uS11">
    <location>
        <begin position="1"/>
        <end position="132"/>
    </location>
</feature>
<comment type="function">
    <text evidence="1">Located on the platform of the 30S subunit, it bridges several disparate RNA helices of the 16S rRNA. Forms part of the Shine-Dalgarno cleft in the 70S ribosome.</text>
</comment>
<comment type="subunit">
    <text evidence="1">Part of the 30S ribosomal subunit. Interacts with proteins S7 and S18. Binds to IF-3.</text>
</comment>
<comment type="similarity">
    <text evidence="1">Belongs to the universal ribosomal protein uS11 family.</text>
</comment>
<reference key="1">
    <citation type="journal article" date="2008" name="Genome Res.">
        <title>Chlamydia trachomatis: genome sequence analysis of lymphogranuloma venereum isolates.</title>
        <authorList>
            <person name="Thomson N.R."/>
            <person name="Holden M.T.G."/>
            <person name="Carder C."/>
            <person name="Lennard N."/>
            <person name="Lockey S.J."/>
            <person name="Marsh P."/>
            <person name="Skipp P."/>
            <person name="O'Connor C.D."/>
            <person name="Goodhead I."/>
            <person name="Norbertzcak H."/>
            <person name="Harris B."/>
            <person name="Ormond D."/>
            <person name="Rance R."/>
            <person name="Quail M.A."/>
            <person name="Parkhill J."/>
            <person name="Stephens R.S."/>
            <person name="Clarke I.N."/>
        </authorList>
    </citation>
    <scope>NUCLEOTIDE SEQUENCE [LARGE SCALE GENOMIC DNA]</scope>
    <source>
        <strain>UCH-1/proctitis</strain>
    </source>
</reference>
<protein>
    <recommendedName>
        <fullName evidence="1">Small ribosomal subunit protein uS11</fullName>
    </recommendedName>
    <alternativeName>
        <fullName evidence="2">30S ribosomal protein S11</fullName>
    </alternativeName>
</protein>
<dbReference type="EMBL" id="AM884177">
    <property type="protein sequence ID" value="CAP07162.1"/>
    <property type="molecule type" value="Genomic_DNA"/>
</dbReference>
<dbReference type="RefSeq" id="WP_009873865.1">
    <property type="nucleotide sequence ID" value="NC_010280.2"/>
</dbReference>
<dbReference type="SMR" id="B0BCE7"/>
<dbReference type="KEGG" id="ctl:CTLon_0765"/>
<dbReference type="HOGENOM" id="CLU_072439_5_0_0"/>
<dbReference type="Proteomes" id="UP001154401">
    <property type="component" value="Chromosome"/>
</dbReference>
<dbReference type="GO" id="GO:1990904">
    <property type="term" value="C:ribonucleoprotein complex"/>
    <property type="evidence" value="ECO:0007669"/>
    <property type="project" value="UniProtKB-KW"/>
</dbReference>
<dbReference type="GO" id="GO:0005840">
    <property type="term" value="C:ribosome"/>
    <property type="evidence" value="ECO:0007669"/>
    <property type="project" value="UniProtKB-KW"/>
</dbReference>
<dbReference type="GO" id="GO:0019843">
    <property type="term" value="F:rRNA binding"/>
    <property type="evidence" value="ECO:0007669"/>
    <property type="project" value="UniProtKB-UniRule"/>
</dbReference>
<dbReference type="GO" id="GO:0003735">
    <property type="term" value="F:structural constituent of ribosome"/>
    <property type="evidence" value="ECO:0007669"/>
    <property type="project" value="InterPro"/>
</dbReference>
<dbReference type="GO" id="GO:0006412">
    <property type="term" value="P:translation"/>
    <property type="evidence" value="ECO:0007669"/>
    <property type="project" value="UniProtKB-UniRule"/>
</dbReference>
<dbReference type="FunFam" id="3.30.420.80:FF:000004">
    <property type="entry name" value="30S ribosomal protein S11"/>
    <property type="match status" value="1"/>
</dbReference>
<dbReference type="Gene3D" id="3.30.420.80">
    <property type="entry name" value="Ribosomal protein S11"/>
    <property type="match status" value="1"/>
</dbReference>
<dbReference type="HAMAP" id="MF_01310">
    <property type="entry name" value="Ribosomal_uS11"/>
    <property type="match status" value="1"/>
</dbReference>
<dbReference type="InterPro" id="IPR001971">
    <property type="entry name" value="Ribosomal_uS11"/>
</dbReference>
<dbReference type="InterPro" id="IPR019981">
    <property type="entry name" value="Ribosomal_uS11_bac-type"/>
</dbReference>
<dbReference type="InterPro" id="IPR018102">
    <property type="entry name" value="Ribosomal_uS11_CS"/>
</dbReference>
<dbReference type="InterPro" id="IPR036967">
    <property type="entry name" value="Ribosomal_uS11_sf"/>
</dbReference>
<dbReference type="NCBIfam" id="NF003698">
    <property type="entry name" value="PRK05309.1"/>
    <property type="match status" value="1"/>
</dbReference>
<dbReference type="NCBIfam" id="TIGR03632">
    <property type="entry name" value="uS11_bact"/>
    <property type="match status" value="1"/>
</dbReference>
<dbReference type="PANTHER" id="PTHR11759">
    <property type="entry name" value="40S RIBOSOMAL PROTEIN S14/30S RIBOSOMAL PROTEIN S11"/>
    <property type="match status" value="1"/>
</dbReference>
<dbReference type="Pfam" id="PF00411">
    <property type="entry name" value="Ribosomal_S11"/>
    <property type="match status" value="1"/>
</dbReference>
<dbReference type="PIRSF" id="PIRSF002131">
    <property type="entry name" value="Ribosomal_S11"/>
    <property type="match status" value="1"/>
</dbReference>
<dbReference type="SUPFAM" id="SSF53137">
    <property type="entry name" value="Translational machinery components"/>
    <property type="match status" value="1"/>
</dbReference>
<dbReference type="PROSITE" id="PS00054">
    <property type="entry name" value="RIBOSOMAL_S11"/>
    <property type="match status" value="1"/>
</dbReference>
<evidence type="ECO:0000255" key="1">
    <source>
        <dbReference type="HAMAP-Rule" id="MF_01310"/>
    </source>
</evidence>
<evidence type="ECO:0000305" key="2"/>
<gene>
    <name evidence="1" type="primary">rpsK</name>
    <name type="ordered locus">CTLon_0765</name>
</gene>
<organism>
    <name type="scientific">Chlamydia trachomatis serovar L2b (strain UCH-1/proctitis)</name>
    <dbReference type="NCBI Taxonomy" id="471473"/>
    <lineage>
        <taxon>Bacteria</taxon>
        <taxon>Pseudomonadati</taxon>
        <taxon>Chlamydiota</taxon>
        <taxon>Chlamydiia</taxon>
        <taxon>Chlamydiales</taxon>
        <taxon>Chlamydiaceae</taxon>
        <taxon>Chlamydia/Chlamydophila group</taxon>
        <taxon>Chlamydia</taxon>
    </lineage>
</organism>
<sequence length="132" mass="13822">MVKNQAQKRGVKRKQVKNIPSGVVHVKATFNNTIVTITDPAGNVISWASAGKVGYSGSRKSSAFAATVAAQDAAKAAMSSGLKEVEVGLKGTGAGRESAVRALISSGLIVSVIRDETPVPHNGCRPRKRRRV</sequence>
<keyword id="KW-0687">Ribonucleoprotein</keyword>
<keyword id="KW-0689">Ribosomal protein</keyword>
<keyword id="KW-0694">RNA-binding</keyword>
<keyword id="KW-0699">rRNA-binding</keyword>
<accession>B0BCE7</accession>
<proteinExistence type="inferred from homology"/>